<protein>
    <recommendedName>
        <fullName evidence="6">Autophagy-related protein 40</fullName>
    </recommendedName>
</protein>
<accession>Q99325</accession>
<accession>D6W2K9</accession>
<reference key="1">
    <citation type="journal article" date="1997" name="Yeast">
        <title>Analysis of a 35.6 kb region on the right arm of Saccharomyces cerevisiae chromosome XV.</title>
        <authorList>
            <person name="Bordonne R."/>
            <person name="Camasses A."/>
            <person name="Madania A."/>
            <person name="Poch O."/>
            <person name="Tarassov I.A."/>
            <person name="Winsor B."/>
            <person name="Martin R.P."/>
        </authorList>
    </citation>
    <scope>NUCLEOTIDE SEQUENCE [GENOMIC DNA]</scope>
    <source>
        <strain>S288c / FY1678</strain>
    </source>
</reference>
<reference key="2">
    <citation type="journal article" date="1997" name="Nature">
        <title>The nucleotide sequence of Saccharomyces cerevisiae chromosome XV.</title>
        <authorList>
            <person name="Dujon B."/>
            <person name="Albermann K."/>
            <person name="Aldea M."/>
            <person name="Alexandraki D."/>
            <person name="Ansorge W."/>
            <person name="Arino J."/>
            <person name="Benes V."/>
            <person name="Bohn C."/>
            <person name="Bolotin-Fukuhara M."/>
            <person name="Bordonne R."/>
            <person name="Boyer J."/>
            <person name="Camasses A."/>
            <person name="Casamayor A."/>
            <person name="Casas C."/>
            <person name="Cheret G."/>
            <person name="Cziepluch C."/>
            <person name="Daignan-Fornier B."/>
            <person name="Dang V.-D."/>
            <person name="de Haan M."/>
            <person name="Delius H."/>
            <person name="Durand P."/>
            <person name="Fairhead C."/>
            <person name="Feldmann H."/>
            <person name="Gaillon L."/>
            <person name="Galisson F."/>
            <person name="Gamo F.-J."/>
            <person name="Gancedo C."/>
            <person name="Goffeau A."/>
            <person name="Goulding S.E."/>
            <person name="Grivell L.A."/>
            <person name="Habbig B."/>
            <person name="Hand N.J."/>
            <person name="Hani J."/>
            <person name="Hattenhorst U."/>
            <person name="Hebling U."/>
            <person name="Hernando Y."/>
            <person name="Herrero E."/>
            <person name="Heumann K."/>
            <person name="Hiesel R."/>
            <person name="Hilger F."/>
            <person name="Hofmann B."/>
            <person name="Hollenberg C.P."/>
            <person name="Hughes B."/>
            <person name="Jauniaux J.-C."/>
            <person name="Kalogeropoulos A."/>
            <person name="Katsoulou C."/>
            <person name="Kordes E."/>
            <person name="Lafuente M.J."/>
            <person name="Landt O."/>
            <person name="Louis E.J."/>
            <person name="Maarse A.C."/>
            <person name="Madania A."/>
            <person name="Mannhaupt G."/>
            <person name="Marck C."/>
            <person name="Martin R.P."/>
            <person name="Mewes H.-W."/>
            <person name="Michaux G."/>
            <person name="Paces V."/>
            <person name="Parle-McDermott A.G."/>
            <person name="Pearson B.M."/>
            <person name="Perrin A."/>
            <person name="Pettersson B."/>
            <person name="Poch O."/>
            <person name="Pohl T.M."/>
            <person name="Poirey R."/>
            <person name="Portetelle D."/>
            <person name="Pujol A."/>
            <person name="Purnelle B."/>
            <person name="Ramezani Rad M."/>
            <person name="Rechmann S."/>
            <person name="Schwager C."/>
            <person name="Schweizer M."/>
            <person name="Sor F."/>
            <person name="Sterky F."/>
            <person name="Tarassov I.A."/>
            <person name="Teodoru C."/>
            <person name="Tettelin H."/>
            <person name="Thierry A."/>
            <person name="Tobiasch E."/>
            <person name="Tzermia M."/>
            <person name="Uhlen M."/>
            <person name="Unseld M."/>
            <person name="Valens M."/>
            <person name="Vandenbol M."/>
            <person name="Vetter I."/>
            <person name="Vlcek C."/>
            <person name="Voet M."/>
            <person name="Volckaert G."/>
            <person name="Voss H."/>
            <person name="Wambutt R."/>
            <person name="Wedler H."/>
            <person name="Wiemann S."/>
            <person name="Winsor B."/>
            <person name="Wolfe K.H."/>
            <person name="Zollner A."/>
            <person name="Zumstein E."/>
            <person name="Kleine K."/>
        </authorList>
    </citation>
    <scope>NUCLEOTIDE SEQUENCE [LARGE SCALE GENOMIC DNA]</scope>
    <source>
        <strain>ATCC 204508 / S288c</strain>
    </source>
</reference>
<reference key="3">
    <citation type="journal article" date="2014" name="G3 (Bethesda)">
        <title>The reference genome sequence of Saccharomyces cerevisiae: Then and now.</title>
        <authorList>
            <person name="Engel S.R."/>
            <person name="Dietrich F.S."/>
            <person name="Fisk D.G."/>
            <person name="Binkley G."/>
            <person name="Balakrishnan R."/>
            <person name="Costanzo M.C."/>
            <person name="Dwight S.S."/>
            <person name="Hitz B.C."/>
            <person name="Karra K."/>
            <person name="Nash R.S."/>
            <person name="Weng S."/>
            <person name="Wong E.D."/>
            <person name="Lloyd P."/>
            <person name="Skrzypek M.S."/>
            <person name="Miyasato S.R."/>
            <person name="Simison M."/>
            <person name="Cherry J.M."/>
        </authorList>
    </citation>
    <scope>GENOME REANNOTATION</scope>
    <source>
        <strain>ATCC 204508 / S288c</strain>
    </source>
</reference>
<reference key="4">
    <citation type="journal article" date="2007" name="Genome Res.">
        <title>Approaching a complete repository of sequence-verified protein-encoding clones for Saccharomyces cerevisiae.</title>
        <authorList>
            <person name="Hu Y."/>
            <person name="Rolfs A."/>
            <person name="Bhullar B."/>
            <person name="Murthy T.V.S."/>
            <person name="Zhu C."/>
            <person name="Berger M.F."/>
            <person name="Camargo A.A."/>
            <person name="Kelley F."/>
            <person name="McCarron S."/>
            <person name="Jepson D."/>
            <person name="Richardson A."/>
            <person name="Raphael J."/>
            <person name="Moreira D."/>
            <person name="Taycher E."/>
            <person name="Zuo D."/>
            <person name="Mohr S."/>
            <person name="Kane M.F."/>
            <person name="Williamson J."/>
            <person name="Simpson A.J.G."/>
            <person name="Bulyk M.L."/>
            <person name="Harlow E."/>
            <person name="Marsischky G."/>
            <person name="Kolodner R.D."/>
            <person name="LaBaer J."/>
        </authorList>
    </citation>
    <scope>NUCLEOTIDE SEQUENCE [GENOMIC DNA]</scope>
    <source>
        <strain>ATCC 204508 / S288c</strain>
    </source>
</reference>
<reference key="5">
    <citation type="journal article" date="2003" name="Biochem. Biophys. Res. Commun.">
        <title>Genome-wide expression analysis of NAP1 in Saccharomyces cerevisiae.</title>
        <authorList>
            <person name="Ohkuni K."/>
            <person name="Shirahige K."/>
            <person name="Kikuchi A."/>
        </authorList>
    </citation>
    <scope>INDUCTION</scope>
</reference>
<reference key="6">
    <citation type="journal article" date="2003" name="Nature">
        <title>Global analysis of protein expression in yeast.</title>
        <authorList>
            <person name="Ghaemmaghami S."/>
            <person name="Huh W.-K."/>
            <person name="Bower K."/>
            <person name="Howson R.W."/>
            <person name="Belle A."/>
            <person name="Dephoure N."/>
            <person name="O'Shea E.K."/>
            <person name="Weissman J.S."/>
        </authorList>
    </citation>
    <scope>LEVEL OF PROTEIN EXPRESSION [LARGE SCALE ANALYSIS]</scope>
</reference>
<reference key="7">
    <citation type="journal article" date="2006" name="Proc. Natl. Acad. Sci. U.S.A.">
        <title>A global topology map of the Saccharomyces cerevisiae membrane proteome.</title>
        <authorList>
            <person name="Kim H."/>
            <person name="Melen K."/>
            <person name="Oesterberg M."/>
            <person name="von Heijne G."/>
        </authorList>
    </citation>
    <scope>TOPOLOGY [LARGE SCALE ANALYSIS]</scope>
    <source>
        <strain>ATCC 208353 / W303-1A</strain>
    </source>
</reference>
<reference key="8">
    <citation type="journal article" date="2015" name="Nature">
        <title>Receptor-mediated selective autophagy degrades the endoplasmic reticulum and the nucleus.</title>
        <authorList>
            <person name="Mochida K."/>
            <person name="Oikawa Y."/>
            <person name="Kimura Y."/>
            <person name="Kirisako H."/>
            <person name="Hirano H."/>
            <person name="Ohsumi Y."/>
            <person name="Nakatogawa H."/>
        </authorList>
    </citation>
    <scope>INTERACTION WITH ATG8 AND ATG11</scope>
    <scope>DOMAIN</scope>
    <scope>DISRUPTION PHENOTYPE</scope>
    <scope>SUBCELLULAR LOCATION</scope>
    <scope>FUNCTION</scope>
    <scope>MUTAGENESIS OF TYR-242 AND MET-245</scope>
</reference>
<dbReference type="EMBL" id="U55020">
    <property type="protein sequence ID" value="AAC49638.1"/>
    <property type="molecule type" value="Genomic_DNA"/>
</dbReference>
<dbReference type="EMBL" id="Z75060">
    <property type="protein sequence ID" value="CAA99358.1"/>
    <property type="molecule type" value="Genomic_DNA"/>
</dbReference>
<dbReference type="EMBL" id="AY557755">
    <property type="protein sequence ID" value="AAS56081.1"/>
    <property type="molecule type" value="Genomic_DNA"/>
</dbReference>
<dbReference type="EMBL" id="BK006948">
    <property type="protein sequence ID" value="DAA10925.1"/>
    <property type="molecule type" value="Genomic_DNA"/>
</dbReference>
<dbReference type="PIR" id="S67040">
    <property type="entry name" value="S67040"/>
</dbReference>
<dbReference type="RefSeq" id="NP_014795.1">
    <property type="nucleotide sequence ID" value="NM_001183571.1"/>
</dbReference>
<dbReference type="PDB" id="7BRN">
    <property type="method" value="X-ray"/>
    <property type="resolution" value="2.23 A"/>
    <property type="chains" value="A=237-252"/>
</dbReference>
<dbReference type="PDBsum" id="7BRN"/>
<dbReference type="SMR" id="Q99325"/>
<dbReference type="BioGRID" id="34548">
    <property type="interactions" value="44"/>
</dbReference>
<dbReference type="DIP" id="DIP-61576N"/>
<dbReference type="FunCoup" id="Q99325">
    <property type="interactions" value="77"/>
</dbReference>
<dbReference type="IntAct" id="Q99325">
    <property type="interactions" value="3"/>
</dbReference>
<dbReference type="STRING" id="4932.YOR152C"/>
<dbReference type="PaxDb" id="4932-YOR152C"/>
<dbReference type="PeptideAtlas" id="Q99325"/>
<dbReference type="EnsemblFungi" id="YOR152C_mRNA">
    <property type="protein sequence ID" value="YOR152C"/>
    <property type="gene ID" value="YOR152C"/>
</dbReference>
<dbReference type="GeneID" id="854323"/>
<dbReference type="KEGG" id="sce:YOR152C"/>
<dbReference type="AGR" id="SGD:S000005678"/>
<dbReference type="SGD" id="S000005678">
    <property type="gene designation" value="ATG40"/>
</dbReference>
<dbReference type="VEuPathDB" id="FungiDB:YOR152C"/>
<dbReference type="eggNOG" id="ENOG502S6VJ">
    <property type="taxonomic scope" value="Eukaryota"/>
</dbReference>
<dbReference type="HOGENOM" id="CLU_1103309_0_0_1"/>
<dbReference type="InParanoid" id="Q99325"/>
<dbReference type="OMA" id="TRELVYD"/>
<dbReference type="OrthoDB" id="4033961at2759"/>
<dbReference type="BioCyc" id="YEAST:G3O-33669-MONOMER"/>
<dbReference type="BioGRID-ORCS" id="854323">
    <property type="hits" value="0 hits in 10 CRISPR screens"/>
</dbReference>
<dbReference type="PRO" id="PR:Q99325"/>
<dbReference type="Proteomes" id="UP000002311">
    <property type="component" value="Chromosome XV"/>
</dbReference>
<dbReference type="RNAct" id="Q99325">
    <property type="molecule type" value="protein"/>
</dbReference>
<dbReference type="GO" id="GO:0032541">
    <property type="term" value="C:cortical endoplasmic reticulum"/>
    <property type="evidence" value="ECO:0000314"/>
    <property type="project" value="SGD"/>
</dbReference>
<dbReference type="GO" id="GO:0005789">
    <property type="term" value="C:endoplasmic reticulum membrane"/>
    <property type="evidence" value="ECO:0007669"/>
    <property type="project" value="UniProtKB-SubCell"/>
</dbReference>
<dbReference type="GO" id="GO:0016020">
    <property type="term" value="C:membrane"/>
    <property type="evidence" value="ECO:0000314"/>
    <property type="project" value="SGD"/>
</dbReference>
<dbReference type="GO" id="GO:0034045">
    <property type="term" value="C:phagophore assembly site membrane"/>
    <property type="evidence" value="ECO:0007669"/>
    <property type="project" value="UniProtKB-SubCell"/>
</dbReference>
<dbReference type="GO" id="GO:0030674">
    <property type="term" value="F:protein-macromolecule adaptor activity"/>
    <property type="evidence" value="ECO:0000315"/>
    <property type="project" value="SGD"/>
</dbReference>
<dbReference type="GO" id="GO:0006995">
    <property type="term" value="P:cellular response to nitrogen starvation"/>
    <property type="evidence" value="ECO:0000315"/>
    <property type="project" value="SGD"/>
</dbReference>
<dbReference type="GO" id="GO:0061709">
    <property type="term" value="P:reticulophagy"/>
    <property type="evidence" value="ECO:0000315"/>
    <property type="project" value="SGD"/>
</dbReference>
<comment type="function">
    <text evidence="5">Acts as a receptor for reticulophagy. Directs autophagic sequestration of folded tubules/sheets derived from the cortical endoplasmic reticulum (cER) and the cytoplasmic endoplasmic reticulum (cytoER) into autophagosomes. Is not required for the cytoplasm-to-vacuole targeting pathway, mitophagy, pexophagy, and non-selective autophagy.</text>
</comment>
<comment type="subunit">
    <text evidence="5">Interacts with ATG8 and ATG11.</text>
</comment>
<comment type="interaction">
    <interactant intactId="EBI-3681992">
        <id>Q99325</id>
    </interactant>
    <interactant intactId="EBI-2684">
        <id>P38182</id>
        <label>ATG8</label>
    </interactant>
    <organismsDiffer>false</organismsDiffer>
    <experiments>3</experiments>
</comment>
<comment type="subcellular location">
    <subcellularLocation>
        <location evidence="5">Endoplasmic reticulum membrane</location>
        <topology evidence="1">Single-pass membrane protein</topology>
    </subcellularLocation>
    <subcellularLocation>
        <location evidence="5">Preautophagosomal structure membrane</location>
        <topology evidence="1">Single-pass membrane protein</topology>
    </subcellularLocation>
</comment>
<comment type="induction">
    <text evidence="3 5">Induced in absence of NAP1 (PubMed:12788058). Expression is increased by rapamycin, which mimics nitrogen starvation by inactivating the TORC1 complex (PubMed:26040717).</text>
</comment>
<comment type="disruption phenotype">
    <text evidence="5">Partially blocks reticulophagy, and the double ATG39/ATG40 knockout almost completely blocks this pathway. Leads to a more densely reticulated cytoplasmic endoplasmic reticulum (cER).</text>
</comment>
<comment type="miscellaneous">
    <text evidence="4">Present with 1890 molecules/cell in log phase SD medium.</text>
</comment>
<name>ATG40_YEAST</name>
<organism>
    <name type="scientific">Saccharomyces cerevisiae (strain ATCC 204508 / S288c)</name>
    <name type="common">Baker's yeast</name>
    <dbReference type="NCBI Taxonomy" id="559292"/>
    <lineage>
        <taxon>Eukaryota</taxon>
        <taxon>Fungi</taxon>
        <taxon>Dikarya</taxon>
        <taxon>Ascomycota</taxon>
        <taxon>Saccharomycotina</taxon>
        <taxon>Saccharomycetes</taxon>
        <taxon>Saccharomycetales</taxon>
        <taxon>Saccharomycetaceae</taxon>
        <taxon>Saccharomyces</taxon>
    </lineage>
</organism>
<evidence type="ECO:0000255" key="1"/>
<evidence type="ECO:0000256" key="2">
    <source>
        <dbReference type="SAM" id="MobiDB-lite"/>
    </source>
</evidence>
<evidence type="ECO:0000269" key="3">
    <source>
    </source>
</evidence>
<evidence type="ECO:0000269" key="4">
    <source>
    </source>
</evidence>
<evidence type="ECO:0000269" key="5">
    <source>
    </source>
</evidence>
<evidence type="ECO:0000303" key="6">
    <source>
    </source>
</evidence>
<evidence type="ECO:0000305" key="7">
    <source>
    </source>
</evidence>
<evidence type="ECO:0000312" key="8">
    <source>
        <dbReference type="SGD" id="S000005678"/>
    </source>
</evidence>
<evidence type="ECO:0007829" key="9">
    <source>
        <dbReference type="PDB" id="7BRN"/>
    </source>
</evidence>
<gene>
    <name evidence="6" type="primary">ATG40</name>
    <name evidence="8" type="ordered locus">YOR152C</name>
    <name evidence="8" type="ORF">O3536</name>
</gene>
<proteinExistence type="evidence at protein level"/>
<sequence>MFNLILWPLFLLTSVAIPLQLTLEVVYLTSSVDFSKASAAKTATSLGQSPVVITIYKSLLKYWSLYEFIHFIYLYTPIDAFLNFLPFTSLLMSFGSICLTRELVYDFIAFMESQNKLTGFLNKITEPNFNSYLLFSSIYNIWFADDTNDKFLFGKLTQILISVTKRYEFPRTFYLAKVSDFLQNLILTRLRPFVTEQPQGDKNRYQNGDRESTKNGAAYQKSSQQSSSFEQNFTSTEFPNDYDFMEDILDETTELD</sequence>
<feature type="signal peptide" evidence="1">
    <location>
        <begin position="1"/>
        <end position="16"/>
    </location>
</feature>
<feature type="chain" id="PRO_0000245280" description="Autophagy-related protein 40">
    <location>
        <begin position="17"/>
        <end position="256"/>
    </location>
</feature>
<feature type="topological domain" description="Lumenal" evidence="1">
    <location>
        <begin position="17"/>
        <end position="67"/>
    </location>
</feature>
<feature type="transmembrane region" description="Helical" evidence="1">
    <location>
        <begin position="68"/>
        <end position="88"/>
    </location>
</feature>
<feature type="topological domain" description="Cytoplasmic" evidence="1">
    <location>
        <begin position="89"/>
        <end position="256"/>
    </location>
</feature>
<feature type="region of interest" description="Disordered" evidence="2">
    <location>
        <begin position="197"/>
        <end position="243"/>
    </location>
</feature>
<feature type="short sequence motif" description="ATG8-binding" evidence="7">
    <location>
        <begin position="242"/>
        <end position="245"/>
    </location>
</feature>
<feature type="compositionally biased region" description="Basic and acidic residues" evidence="2">
    <location>
        <begin position="199"/>
        <end position="213"/>
    </location>
</feature>
<feature type="compositionally biased region" description="Low complexity" evidence="2">
    <location>
        <begin position="222"/>
        <end position="238"/>
    </location>
</feature>
<feature type="mutagenesis site" description="Impairs interaction with ATG8 and decreases subsequent reticulophagy; when associated with A-245." evidence="5">
    <original>Y</original>
    <variation>A</variation>
    <location>
        <position position="242"/>
    </location>
</feature>
<feature type="mutagenesis site" description="Impairs interaction with ATG8 and decreases subsequent reticulophagy; when associated with A-245." evidence="5">
    <original>M</original>
    <variation>A</variation>
    <location>
        <position position="245"/>
    </location>
</feature>
<feature type="turn" evidence="9">
    <location>
        <begin position="238"/>
        <end position="241"/>
    </location>
</feature>
<feature type="helix" evidence="9">
    <location>
        <begin position="246"/>
        <end position="248"/>
    </location>
</feature>
<keyword id="KW-0002">3D-structure</keyword>
<keyword id="KW-0072">Autophagy</keyword>
<keyword id="KW-0256">Endoplasmic reticulum</keyword>
<keyword id="KW-0472">Membrane</keyword>
<keyword id="KW-1185">Reference proteome</keyword>
<keyword id="KW-0732">Signal</keyword>
<keyword id="KW-0812">Transmembrane</keyword>
<keyword id="KW-1133">Transmembrane helix</keyword>